<comment type="similarity">
    <text evidence="1">Belongs to the UPF0246 family.</text>
</comment>
<reference key="1">
    <citation type="submission" date="2008-04" db="EMBL/GenBank/DDBJ databases">
        <title>Complete sequence of chromosome 1 of Burkholderia ambifaria MC40-6.</title>
        <authorList>
            <person name="Copeland A."/>
            <person name="Lucas S."/>
            <person name="Lapidus A."/>
            <person name="Glavina del Rio T."/>
            <person name="Dalin E."/>
            <person name="Tice H."/>
            <person name="Pitluck S."/>
            <person name="Chain P."/>
            <person name="Malfatti S."/>
            <person name="Shin M."/>
            <person name="Vergez L."/>
            <person name="Lang D."/>
            <person name="Schmutz J."/>
            <person name="Larimer F."/>
            <person name="Land M."/>
            <person name="Hauser L."/>
            <person name="Kyrpides N."/>
            <person name="Lykidis A."/>
            <person name="Ramette A."/>
            <person name="Konstantinidis K."/>
            <person name="Tiedje J."/>
            <person name="Richardson P."/>
        </authorList>
    </citation>
    <scope>NUCLEOTIDE SEQUENCE [LARGE SCALE GENOMIC DNA]</scope>
    <source>
        <strain>MC40-6</strain>
    </source>
</reference>
<proteinExistence type="inferred from homology"/>
<sequence length="260" mass="29130">MIIVLSPAKSLDYDTPAHVPSYTKPAFVDDASELIDGLRKLSPQDIATLMDISDPLARLNFQRYADWSPTFSPANAKQAVLAFNGDVYEGFDAKSLSAADLDYAQQHVRVLSGLYGLLRPLDLLQPYRLEMGTRFANARGKDLYAFWGDRITRALNEQLETRSGAARVLVNCASTEYFKSVKPKLLAAPVVTPVFEDWKGGRYKIISFHAKRARGLMARYIVENRIAEPAALKDFAMEDYVFDAAASNDSTYVYRRRIGE</sequence>
<organism>
    <name type="scientific">Burkholderia ambifaria (strain MC40-6)</name>
    <dbReference type="NCBI Taxonomy" id="398577"/>
    <lineage>
        <taxon>Bacteria</taxon>
        <taxon>Pseudomonadati</taxon>
        <taxon>Pseudomonadota</taxon>
        <taxon>Betaproteobacteria</taxon>
        <taxon>Burkholderiales</taxon>
        <taxon>Burkholderiaceae</taxon>
        <taxon>Burkholderia</taxon>
        <taxon>Burkholderia cepacia complex</taxon>
    </lineage>
</organism>
<gene>
    <name type="ordered locus">BamMC406_2140</name>
</gene>
<dbReference type="EMBL" id="CP001025">
    <property type="protein sequence ID" value="ACB64619.1"/>
    <property type="molecule type" value="Genomic_DNA"/>
</dbReference>
<dbReference type="SMR" id="B1YTN1"/>
<dbReference type="KEGG" id="bac:BamMC406_2140"/>
<dbReference type="HOGENOM" id="CLU_061989_0_0_4"/>
<dbReference type="OrthoDB" id="9777133at2"/>
<dbReference type="Proteomes" id="UP000001680">
    <property type="component" value="Chromosome 1"/>
</dbReference>
<dbReference type="GO" id="GO:0005829">
    <property type="term" value="C:cytosol"/>
    <property type="evidence" value="ECO:0007669"/>
    <property type="project" value="TreeGrafter"/>
</dbReference>
<dbReference type="GO" id="GO:0033194">
    <property type="term" value="P:response to hydroperoxide"/>
    <property type="evidence" value="ECO:0007669"/>
    <property type="project" value="TreeGrafter"/>
</dbReference>
<dbReference type="HAMAP" id="MF_00652">
    <property type="entry name" value="UPF0246"/>
    <property type="match status" value="1"/>
</dbReference>
<dbReference type="InterPro" id="IPR005583">
    <property type="entry name" value="YaaA"/>
</dbReference>
<dbReference type="NCBIfam" id="NF002541">
    <property type="entry name" value="PRK02101.1-1"/>
    <property type="match status" value="1"/>
</dbReference>
<dbReference type="NCBIfam" id="NF002542">
    <property type="entry name" value="PRK02101.1-3"/>
    <property type="match status" value="1"/>
</dbReference>
<dbReference type="PANTHER" id="PTHR30283:SF4">
    <property type="entry name" value="PEROXIDE STRESS RESISTANCE PROTEIN YAAA"/>
    <property type="match status" value="1"/>
</dbReference>
<dbReference type="PANTHER" id="PTHR30283">
    <property type="entry name" value="PEROXIDE STRESS RESPONSE PROTEIN YAAA"/>
    <property type="match status" value="1"/>
</dbReference>
<dbReference type="Pfam" id="PF03883">
    <property type="entry name" value="H2O2_YaaD"/>
    <property type="match status" value="1"/>
</dbReference>
<accession>B1YTN1</accession>
<name>Y2140_BURA4</name>
<protein>
    <recommendedName>
        <fullName evidence="1">UPF0246 protein BamMC406_2140</fullName>
    </recommendedName>
</protein>
<evidence type="ECO:0000255" key="1">
    <source>
        <dbReference type="HAMAP-Rule" id="MF_00652"/>
    </source>
</evidence>
<feature type="chain" id="PRO_1000131101" description="UPF0246 protein BamMC406_2140">
    <location>
        <begin position="1"/>
        <end position="260"/>
    </location>
</feature>